<sequence>MIQVAKIIGTGLATTGLIGAGIGIGVVFGSLIIGVSRNPSLKSQLFAYAILGFAFSEATGLFALMMAFLLLYVA</sequence>
<proteinExistence type="inferred from homology"/>
<organism>
    <name type="scientific">Neurospora crassa (strain ATCC 24698 / 74-OR23-1A / CBS 708.71 / DSM 1257 / FGSC 987)</name>
    <dbReference type="NCBI Taxonomy" id="367110"/>
    <lineage>
        <taxon>Eukaryota</taxon>
        <taxon>Fungi</taxon>
        <taxon>Dikarya</taxon>
        <taxon>Ascomycota</taxon>
        <taxon>Pezizomycotina</taxon>
        <taxon>Sordariomycetes</taxon>
        <taxon>Sordariomycetidae</taxon>
        <taxon>Sordariales</taxon>
        <taxon>Sordariaceae</taxon>
        <taxon>Neurospora</taxon>
    </lineage>
</organism>
<evidence type="ECO:0000250" key="1"/>
<evidence type="ECO:0000255" key="2"/>
<evidence type="ECO:0000305" key="3"/>
<comment type="function">
    <text evidence="1">Mitochondrial membrane ATP synthase (F(1)F(0) ATP synthase or Complex V) produces ATP from ADP in the presence of a proton gradient across the membrane which is generated by electron transport complexes of the respiratory chain. F-type ATPases consist of two structural domains, F(1) - containing the extramembraneous catalytic core and F(0) - containing the membrane proton channel, linked together by a central stalk and a peripheral stalk. During catalysis, ATP synthesis in the catalytic domain of F(1) is coupled via a rotary mechanism of the central stalk subunits to proton translocation. Part of the complex F(0) domain. A homomeric c-ring of probably 10 subunits is part of the complex rotary element (By similarity).</text>
</comment>
<comment type="subunit">
    <text evidence="1">F-type ATPases have 2 components, CF(1) - the catalytic core - and CF(0) - the membrane proton channel. CF(1) has five subunits: alpha(3), beta(3), gamma(1), delta(1), epsilon(1). CF(0) has three main subunits: a, b and c (By similarity).</text>
</comment>
<comment type="subcellular location">
    <subcellularLocation>
        <location evidence="3">Mitochondrion inner membrane</location>
        <topology evidence="3">Multi-pass membrane protein</topology>
    </subcellularLocation>
</comment>
<comment type="similarity">
    <text evidence="3">Belongs to the ATPase C chain family.</text>
</comment>
<geneLocation type="mitochondrion"/>
<protein>
    <recommendedName>
        <fullName>ATP synthase subunit 9, mitochondrial</fullName>
    </recommendedName>
    <alternativeName>
        <fullName>Lipid-binding protein</fullName>
    </alternativeName>
</protein>
<accession>Q12635</accession>
<accession>M1RFT3</accession>
<name>ATP9M_NEUCR</name>
<feature type="chain" id="PRO_0000414730" description="ATP synthase subunit 9, mitochondrial">
    <location>
        <begin position="1"/>
        <end position="74"/>
    </location>
</feature>
<feature type="transmembrane region" description="Helical" evidence="2">
    <location>
        <begin position="16"/>
        <end position="36"/>
    </location>
</feature>
<feature type="transmembrane region" description="Helical" evidence="2">
    <location>
        <begin position="50"/>
        <end position="70"/>
    </location>
</feature>
<feature type="site" description="Reversibly protonated during proton transport" evidence="1">
    <location>
        <position position="57"/>
    </location>
</feature>
<keyword id="KW-0138">CF(0)</keyword>
<keyword id="KW-0375">Hydrogen ion transport</keyword>
<keyword id="KW-0406">Ion transport</keyword>
<keyword id="KW-0446">Lipid-binding</keyword>
<keyword id="KW-0472">Membrane</keyword>
<keyword id="KW-0496">Mitochondrion</keyword>
<keyword id="KW-0999">Mitochondrion inner membrane</keyword>
<keyword id="KW-1185">Reference proteome</keyword>
<keyword id="KW-0812">Transmembrane</keyword>
<keyword id="KW-1133">Transmembrane helix</keyword>
<keyword id="KW-0813">Transport</keyword>
<reference key="1">
    <citation type="journal article" date="1982" name="Nature">
        <title>Similar genes for a mitochondrial ATPase subunit in the nuclear and mitochondrial genomes of Neurospora crassa.</title>
        <authorList>
            <person name="van den Boogaart P."/>
            <person name="Samallo J."/>
            <person name="Agsteribbe E."/>
        </authorList>
    </citation>
    <scope>NUCLEOTIDE SEQUENCE [GENOMIC DNA]</scope>
</reference>
<reference key="2">
    <citation type="journal article" date="2003" name="Nature">
        <title>The genome sequence of the filamentous fungus Neurospora crassa.</title>
        <authorList>
            <person name="Galagan J.E."/>
            <person name="Calvo S.E."/>
            <person name="Borkovich K.A."/>
            <person name="Selker E.U."/>
            <person name="Read N.D."/>
            <person name="Jaffe D.B."/>
            <person name="FitzHugh W."/>
            <person name="Ma L.-J."/>
            <person name="Smirnov S."/>
            <person name="Purcell S."/>
            <person name="Rehman B."/>
            <person name="Elkins T."/>
            <person name="Engels R."/>
            <person name="Wang S."/>
            <person name="Nielsen C.B."/>
            <person name="Butler J."/>
            <person name="Endrizzi M."/>
            <person name="Qui D."/>
            <person name="Ianakiev P."/>
            <person name="Bell-Pedersen D."/>
            <person name="Nelson M.A."/>
            <person name="Werner-Washburne M."/>
            <person name="Selitrennikoff C.P."/>
            <person name="Kinsey J.A."/>
            <person name="Braun E.L."/>
            <person name="Zelter A."/>
            <person name="Schulte U."/>
            <person name="Kothe G.O."/>
            <person name="Jedd G."/>
            <person name="Mewes H.-W."/>
            <person name="Staben C."/>
            <person name="Marcotte E."/>
            <person name="Greenberg D."/>
            <person name="Roy A."/>
            <person name="Foley K."/>
            <person name="Naylor J."/>
            <person name="Stange-Thomann N."/>
            <person name="Barrett R."/>
            <person name="Gnerre S."/>
            <person name="Kamal M."/>
            <person name="Kamvysselis M."/>
            <person name="Mauceli E.W."/>
            <person name="Bielke C."/>
            <person name="Rudd S."/>
            <person name="Frishman D."/>
            <person name="Krystofova S."/>
            <person name="Rasmussen C."/>
            <person name="Metzenberg R.L."/>
            <person name="Perkins D.D."/>
            <person name="Kroken S."/>
            <person name="Cogoni C."/>
            <person name="Macino G."/>
            <person name="Catcheside D.E.A."/>
            <person name="Li W."/>
            <person name="Pratt R.J."/>
            <person name="Osmani S.A."/>
            <person name="DeSouza C.P.C."/>
            <person name="Glass N.L."/>
            <person name="Orbach M.J."/>
            <person name="Berglund J.A."/>
            <person name="Voelker R."/>
            <person name="Yarden O."/>
            <person name="Plamann M."/>
            <person name="Seiler S."/>
            <person name="Dunlap J.C."/>
            <person name="Radford A."/>
            <person name="Aramayo R."/>
            <person name="Natvig D.O."/>
            <person name="Alex L.A."/>
            <person name="Mannhaupt G."/>
            <person name="Ebbole D.J."/>
            <person name="Freitag M."/>
            <person name="Paulsen I."/>
            <person name="Sachs M.S."/>
            <person name="Lander E.S."/>
            <person name="Nusbaum C."/>
            <person name="Birren B.W."/>
        </authorList>
    </citation>
    <scope>NUCLEOTIDE SEQUENCE [LARGE SCALE GENOMIC DNA]</scope>
    <source>
        <strain>ATCC 24698 / 74-OR23-1A / CBS 708.71 / DSM 1257 / FGSC 987</strain>
    </source>
</reference>
<reference key="3">
    <citation type="book" date="2004" name="The Mycota II, Genetics and Biotechnology (2nd edition)">
        <title>Mitochondrial genetics of Neurospora.</title>
        <editorList>
            <person name="Kueck U."/>
        </editorList>
        <authorList>
            <person name="Kennell J.C."/>
            <person name="Collins R.A."/>
            <person name="Griffiths A.J.F."/>
            <person name="Nargang F.E."/>
        </authorList>
    </citation>
    <scope>GENOME REANNOTATION</scope>
    <source>
        <strain>ATCC 24698 / 74-OR23-1A / CBS 708.71 / DSM 1257 / FGSC 987</strain>
    </source>
</reference>
<gene>
    <name type="primary">atp-9</name>
    <name type="ORF">NCU16027</name>
</gene>
<dbReference type="EMBL" id="V00667">
    <property type="protein sequence ID" value="CAA24039.1"/>
    <property type="molecule type" value="Genomic_DNA"/>
</dbReference>
<dbReference type="EMBL" id="KC683708">
    <property type="protein sequence ID" value="AGG16016.1"/>
    <property type="molecule type" value="Genomic_DNA"/>
</dbReference>
<dbReference type="PIR" id="T43671">
    <property type="entry name" value="T43671"/>
</dbReference>
<dbReference type="RefSeq" id="YP_009126728.1">
    <property type="nucleotide sequence ID" value="NC_026614.1"/>
</dbReference>
<dbReference type="SMR" id="Q12635"/>
<dbReference type="FunCoup" id="Q12635">
    <property type="interactions" value="719"/>
</dbReference>
<dbReference type="STRING" id="367110.Q12635"/>
<dbReference type="EnsemblFungi" id="AGG16016">
    <property type="protein sequence ID" value="AGG16016"/>
    <property type="gene ID" value="NCU16027"/>
</dbReference>
<dbReference type="GeneID" id="23681582"/>
<dbReference type="KEGG" id="ncr:NCU16027"/>
<dbReference type="VEuPathDB" id="FungiDB:NCU16027"/>
<dbReference type="InParanoid" id="Q12635"/>
<dbReference type="OrthoDB" id="438052at2759"/>
<dbReference type="Proteomes" id="UP000001805">
    <property type="component" value="Mitochondrion"/>
</dbReference>
<dbReference type="GO" id="GO:0005743">
    <property type="term" value="C:mitochondrial inner membrane"/>
    <property type="evidence" value="ECO:0007669"/>
    <property type="project" value="UniProtKB-SubCell"/>
</dbReference>
<dbReference type="GO" id="GO:0045259">
    <property type="term" value="C:proton-transporting ATP synthase complex"/>
    <property type="evidence" value="ECO:0007669"/>
    <property type="project" value="UniProtKB-KW"/>
</dbReference>
<dbReference type="GO" id="GO:0033177">
    <property type="term" value="C:proton-transporting two-sector ATPase complex, proton-transporting domain"/>
    <property type="evidence" value="ECO:0007669"/>
    <property type="project" value="InterPro"/>
</dbReference>
<dbReference type="GO" id="GO:0016887">
    <property type="term" value="F:ATP hydrolysis activity"/>
    <property type="evidence" value="ECO:0007669"/>
    <property type="project" value="EnsemblFungi"/>
</dbReference>
<dbReference type="GO" id="GO:0042802">
    <property type="term" value="F:identical protein binding"/>
    <property type="evidence" value="ECO:0007669"/>
    <property type="project" value="EnsemblFungi"/>
</dbReference>
<dbReference type="GO" id="GO:0008289">
    <property type="term" value="F:lipid binding"/>
    <property type="evidence" value="ECO:0007669"/>
    <property type="project" value="UniProtKB-KW"/>
</dbReference>
<dbReference type="GO" id="GO:0046933">
    <property type="term" value="F:proton-transporting ATP synthase activity, rotational mechanism"/>
    <property type="evidence" value="ECO:0007669"/>
    <property type="project" value="EnsemblFungi"/>
</dbReference>
<dbReference type="GO" id="GO:0015986">
    <property type="term" value="P:proton motive force-driven ATP synthesis"/>
    <property type="evidence" value="ECO:0000318"/>
    <property type="project" value="GO_Central"/>
</dbReference>
<dbReference type="CDD" id="cd18182">
    <property type="entry name" value="ATP-synt_Fo_c_ATP5G3"/>
    <property type="match status" value="1"/>
</dbReference>
<dbReference type="FunFam" id="1.20.20.10:FF:000009">
    <property type="entry name" value="ATP synthase subunit 9, mitochondrial"/>
    <property type="match status" value="1"/>
</dbReference>
<dbReference type="Gene3D" id="1.20.20.10">
    <property type="entry name" value="F1F0 ATP synthase subunit C"/>
    <property type="match status" value="1"/>
</dbReference>
<dbReference type="HAMAP" id="MF_01396">
    <property type="entry name" value="ATP_synth_c_bact"/>
    <property type="match status" value="1"/>
</dbReference>
<dbReference type="InterPro" id="IPR000454">
    <property type="entry name" value="ATP_synth_F0_csu"/>
</dbReference>
<dbReference type="InterPro" id="IPR020537">
    <property type="entry name" value="ATP_synth_F0_csu_DDCD_BS"/>
</dbReference>
<dbReference type="InterPro" id="IPR038662">
    <property type="entry name" value="ATP_synth_F0_csu_sf"/>
</dbReference>
<dbReference type="InterPro" id="IPR002379">
    <property type="entry name" value="ATPase_proteolipid_c-like_dom"/>
</dbReference>
<dbReference type="InterPro" id="IPR035921">
    <property type="entry name" value="F/V-ATP_Csub_sf"/>
</dbReference>
<dbReference type="PANTHER" id="PTHR10031">
    <property type="entry name" value="ATP SYNTHASE LIPID-BINDING PROTEIN, MITOCHONDRIAL"/>
    <property type="match status" value="1"/>
</dbReference>
<dbReference type="PANTHER" id="PTHR10031:SF0">
    <property type="entry name" value="ATPASE PROTEIN 9"/>
    <property type="match status" value="1"/>
</dbReference>
<dbReference type="Pfam" id="PF00137">
    <property type="entry name" value="ATP-synt_C"/>
    <property type="match status" value="1"/>
</dbReference>
<dbReference type="PRINTS" id="PR00124">
    <property type="entry name" value="ATPASEC"/>
</dbReference>
<dbReference type="SUPFAM" id="SSF81333">
    <property type="entry name" value="F1F0 ATP synthase subunit C"/>
    <property type="match status" value="1"/>
</dbReference>
<dbReference type="PROSITE" id="PS00605">
    <property type="entry name" value="ATPASE_C"/>
    <property type="match status" value="1"/>
</dbReference>